<protein>
    <recommendedName>
        <fullName evidence="1">Penicillin-binding protein activator LpoA</fullName>
        <shortName evidence="1">PBP activator LpoA</shortName>
    </recommendedName>
</protein>
<feature type="signal peptide" evidence="1">
    <location>
        <begin position="1"/>
        <end position="26"/>
    </location>
</feature>
<feature type="chain" id="PRO_0000405938" description="Penicillin-binding protein activator LpoA">
    <location>
        <begin position="27"/>
        <end position="677"/>
    </location>
</feature>
<feature type="region of interest" description="Disordered" evidence="2">
    <location>
        <begin position="309"/>
        <end position="359"/>
    </location>
</feature>
<feature type="compositionally biased region" description="Low complexity" evidence="2">
    <location>
        <begin position="313"/>
        <end position="355"/>
    </location>
</feature>
<feature type="lipid moiety-binding region" description="N-palmitoyl cysteine" evidence="1">
    <location>
        <position position="27"/>
    </location>
</feature>
<feature type="lipid moiety-binding region" description="S-diacylglycerol cysteine" evidence="1">
    <location>
        <position position="27"/>
    </location>
</feature>
<comment type="function">
    <text evidence="1">Regulator of peptidoglycan synthesis that is essential for the function of penicillin-binding protein 1A (PBP1a).</text>
</comment>
<comment type="subunit">
    <text evidence="1">Interacts with PBP1a.</text>
</comment>
<comment type="subcellular location">
    <subcellularLocation>
        <location evidence="1">Cell outer membrane</location>
        <topology evidence="1">Lipid-anchor</topology>
        <orientation evidence="1">Periplasmic side</orientation>
    </subcellularLocation>
</comment>
<comment type="similarity">
    <text evidence="1">Belongs to the LpoA family.</text>
</comment>
<comment type="sequence caution" evidence="3">
    <conflict type="erroneous initiation">
        <sequence resource="EMBL-CDS" id="ADD78641"/>
    </conflict>
    <text>Extended N-terminus.</text>
</comment>
<keyword id="KW-0998">Cell outer membrane</keyword>
<keyword id="KW-0133">Cell shape</keyword>
<keyword id="KW-0449">Lipoprotein</keyword>
<keyword id="KW-0472">Membrane</keyword>
<keyword id="KW-0564">Palmitate</keyword>
<keyword id="KW-0573">Peptidoglycan synthesis</keyword>
<keyword id="KW-1185">Reference proteome</keyword>
<keyword id="KW-0732">Signal</keyword>
<dbReference type="EMBL" id="CP001875">
    <property type="protein sequence ID" value="ADD78641.1"/>
    <property type="status" value="ALT_INIT"/>
    <property type="molecule type" value="Genomic_DNA"/>
</dbReference>
<dbReference type="RefSeq" id="WP_041457821.1">
    <property type="nucleotide sequence ID" value="NC_013956.2"/>
</dbReference>
<dbReference type="SMR" id="D4GNT6"/>
<dbReference type="STRING" id="706191.PANA_3474"/>
<dbReference type="KEGG" id="pam:PANA_3474"/>
<dbReference type="eggNOG" id="COG3107">
    <property type="taxonomic scope" value="Bacteria"/>
</dbReference>
<dbReference type="HOGENOM" id="CLU_026091_1_1_6"/>
<dbReference type="Proteomes" id="UP000001702">
    <property type="component" value="Chromosome"/>
</dbReference>
<dbReference type="GO" id="GO:0031241">
    <property type="term" value="C:periplasmic side of cell outer membrane"/>
    <property type="evidence" value="ECO:0007669"/>
    <property type="project" value="UniProtKB-UniRule"/>
</dbReference>
<dbReference type="GO" id="GO:0030234">
    <property type="term" value="F:enzyme regulator activity"/>
    <property type="evidence" value="ECO:0007669"/>
    <property type="project" value="UniProtKB-UniRule"/>
</dbReference>
<dbReference type="GO" id="GO:0009252">
    <property type="term" value="P:peptidoglycan biosynthetic process"/>
    <property type="evidence" value="ECO:0007669"/>
    <property type="project" value="UniProtKB-UniRule"/>
</dbReference>
<dbReference type="GO" id="GO:0008360">
    <property type="term" value="P:regulation of cell shape"/>
    <property type="evidence" value="ECO:0007669"/>
    <property type="project" value="UniProtKB-KW"/>
</dbReference>
<dbReference type="CDD" id="cd06339">
    <property type="entry name" value="PBP1_YraM_LppC_lipoprotein-like"/>
    <property type="match status" value="1"/>
</dbReference>
<dbReference type="Gene3D" id="1.25.40.650">
    <property type="match status" value="1"/>
</dbReference>
<dbReference type="Gene3D" id="3.40.50.2300">
    <property type="match status" value="2"/>
</dbReference>
<dbReference type="Gene3D" id="1.25.40.10">
    <property type="entry name" value="Tetratricopeptide repeat domain"/>
    <property type="match status" value="1"/>
</dbReference>
<dbReference type="HAMAP" id="MF_01890">
    <property type="entry name" value="LpoA"/>
    <property type="match status" value="1"/>
</dbReference>
<dbReference type="InterPro" id="IPR007443">
    <property type="entry name" value="LpoA"/>
</dbReference>
<dbReference type="InterPro" id="IPR028082">
    <property type="entry name" value="Peripla_BP_I"/>
</dbReference>
<dbReference type="InterPro" id="IPR011990">
    <property type="entry name" value="TPR-like_helical_dom_sf"/>
</dbReference>
<dbReference type="PANTHER" id="PTHR38038">
    <property type="entry name" value="PENICILLIN-BINDING PROTEIN ACTIVATOR LPOA"/>
    <property type="match status" value="1"/>
</dbReference>
<dbReference type="PANTHER" id="PTHR38038:SF1">
    <property type="entry name" value="PENICILLIN-BINDING PROTEIN ACTIVATOR LPOA"/>
    <property type="match status" value="1"/>
</dbReference>
<dbReference type="Pfam" id="PF04348">
    <property type="entry name" value="LppC"/>
    <property type="match status" value="2"/>
</dbReference>
<dbReference type="SUPFAM" id="SSF53822">
    <property type="entry name" value="Periplasmic binding protein-like I"/>
    <property type="match status" value="1"/>
</dbReference>
<dbReference type="PROSITE" id="PS51257">
    <property type="entry name" value="PROKAR_LIPOPROTEIN"/>
    <property type="match status" value="1"/>
</dbReference>
<sequence>MLPSKIVRHKAGRFVPVLLAGLILAACSGQGPKSQSVDIQAPVTNNSAYYLQQVQQSSDDSKTDWQLLAIRALLKEGKYPQAAQAIGELPNQLSDKQQQELLLLKAQSLVAQQKIADAQPILSQVKTSELSQDQLARYYGLQIASAQGKTSLALLRAYIAQEPLLKGDERQQNIDATWQALTQLSQQDMNSLVINADENILQGWLDLLTAWHANAQDANMLKSAIKDWQTRYPDNPAAKTLPTQLSQVQNFTKASTSTIALLLPLNGQAQMFASAIQKGFNDAKNGTLATAPQATPGSAQDPIAINQQQPADANAVVSPSANPAAAQQSGTAQQPATTQQQPQQQPAAEPASNAQVKVYDTSSQPIAQVMQQAQQDGATLVVGPLLKNNVETVANSQTPLNVLALNEPEQIQNHPNMCYFALSPEDEARDAAHHIWDQGKRQPLLLVPRNGLGDRVTAAFTKEWQSLGGGTVLQQRFGSVSELKQGINSGAGISMSGTPVVMPSSSQPQSVSVAGLNIPAPQTSAPAASSGGAIDAAYIVSTQDELQLIKPMISMRTGSRSNVALYASSRSAQAGAGPDFRLEMEGLQFSDIPLLSGANPALMQQAAKSFNNDYSLVRLYAMGIDAWTLSNHFNQMRQVPGFSLDGNTGKLSATADCVINRKLTWNQYRQGNIVPAS</sequence>
<name>LPOA_PANAM</name>
<proteinExistence type="inferred from homology"/>
<evidence type="ECO:0000255" key="1">
    <source>
        <dbReference type="HAMAP-Rule" id="MF_01890"/>
    </source>
</evidence>
<evidence type="ECO:0000256" key="2">
    <source>
        <dbReference type="SAM" id="MobiDB-lite"/>
    </source>
</evidence>
<evidence type="ECO:0000305" key="3"/>
<reference key="1">
    <citation type="journal article" date="2010" name="J. Bacteriol.">
        <title>Genome sequence of Pantoea ananatis LMG20103, the causative agent of Eucalyptus blight and dieback.</title>
        <authorList>
            <person name="De Maayer P."/>
            <person name="Chan W.Y."/>
            <person name="Venter S.N."/>
            <person name="Toth I.K."/>
            <person name="Birch P.R."/>
            <person name="Joubert F."/>
            <person name="Coutinho T.A."/>
        </authorList>
    </citation>
    <scope>NUCLEOTIDE SEQUENCE [LARGE SCALE GENOMIC DNA]</scope>
    <source>
        <strain>LMG 20103</strain>
    </source>
</reference>
<organism>
    <name type="scientific">Pantoea ananatis (strain LMG 20103)</name>
    <dbReference type="NCBI Taxonomy" id="706191"/>
    <lineage>
        <taxon>Bacteria</taxon>
        <taxon>Pseudomonadati</taxon>
        <taxon>Pseudomonadota</taxon>
        <taxon>Gammaproteobacteria</taxon>
        <taxon>Enterobacterales</taxon>
        <taxon>Erwiniaceae</taxon>
        <taxon>Pantoea</taxon>
    </lineage>
</organism>
<accession>D4GNT6</accession>
<gene>
    <name evidence="1" type="primary">lpoA</name>
    <name type="ordered locus">PANA_3474</name>
</gene>